<accession>Q05108</accession>
<protein>
    <recommendedName>
        <fullName>Venom allergen 5</fullName>
    </recommendedName>
    <alternativeName>
        <fullName>Allergen Dol a V</fullName>
    </alternativeName>
    <alternativeName>
        <fullName>Antigen 5</fullName>
        <shortName>Ag5</shortName>
    </alternativeName>
    <alternativeName>
        <fullName>Cysteine-rich venom protein</fullName>
        <shortName>CRVP</shortName>
    </alternativeName>
    <allergenName>Dol a 5</allergenName>
</protein>
<comment type="subcellular location">
    <subcellularLocation>
        <location>Secreted</location>
    </subcellularLocation>
</comment>
<comment type="tissue specificity">
    <text>Expressed by the venom gland.</text>
</comment>
<comment type="allergen">
    <text>Causes an allergic reaction in human.</text>
</comment>
<comment type="similarity">
    <text evidence="2">Belongs to the CRISP family. Venom allergen 5-like subfamily.</text>
</comment>
<feature type="chain" id="PRO_0000211533" description="Venom allergen 5">
    <location>
        <begin position="1"/>
        <end position="203"/>
    </location>
</feature>
<feature type="domain" description="SCP">
    <location>
        <begin position="45"/>
        <end position="188"/>
    </location>
</feature>
<feature type="disulfide bond" evidence="1">
    <location>
        <begin position="4"/>
        <end position="15"/>
    </location>
</feature>
<feature type="disulfide bond" evidence="1">
    <location>
        <begin position="7"/>
        <end position="100"/>
    </location>
</feature>
<feature type="disulfide bond" evidence="1">
    <location>
        <begin position="25"/>
        <end position="93"/>
    </location>
</feature>
<feature type="disulfide bond" evidence="1">
    <location>
        <begin position="169"/>
        <end position="186"/>
    </location>
</feature>
<keyword id="KW-0020">Allergen</keyword>
<keyword id="KW-0903">Direct protein sequencing</keyword>
<keyword id="KW-1015">Disulfide bond</keyword>
<keyword id="KW-0964">Secreted</keyword>
<sequence>NNYCKICPKGTHTLCKYGTSMKPNCGGKIVKSYGVTNDEKNEIVKRHNEFRQKVAQGLETRGNPGPQPPAKNMNLLVWNDELAKIAQTWANQCNFGHDQCRNTAKYPVGQNVAIASTTGNSYQTMSYLIKMWEDEVKDYNPHKDLMHNNFSKVGHYTQMVWGKTKEIGCGSVKYIENKWHTHYLVCNYGPAGNYMNQPVYERK</sequence>
<evidence type="ECO:0000250" key="1"/>
<evidence type="ECO:0000305" key="2"/>
<proteinExistence type="evidence at protein level"/>
<reference key="1">
    <citation type="journal article" date="1993" name="J. Immunol.">
        <title>Sequence analysis and antigenic cross-reactivity of a venom allergen, antigen 5, from hornets, wasps, and yellow jackets.</title>
        <authorList>
            <person name="Lu G."/>
            <person name="Villalba M."/>
            <person name="Coscia M.R."/>
            <person name="Hoffman D.R."/>
            <person name="King T.P."/>
        </authorList>
    </citation>
    <scope>NUCLEOTIDE SEQUENCE [MRNA]</scope>
    <scope>PARTIAL PROTEIN SEQUENCE</scope>
    <source>
        <tissue>Venom</tissue>
        <tissue>Venom gland</tissue>
    </source>
</reference>
<dbReference type="EMBL" id="M98859">
    <property type="protein sequence ID" value="AAA28303.1"/>
    <property type="molecule type" value="mRNA"/>
</dbReference>
<dbReference type="SMR" id="Q05108"/>
<dbReference type="Allergome" id="327">
    <property type="allergen name" value="Dol a 5"/>
</dbReference>
<dbReference type="Allergome" id="3272">
    <property type="allergen name" value="Dol a 5.0101"/>
</dbReference>
<dbReference type="GO" id="GO:0005576">
    <property type="term" value="C:extracellular region"/>
    <property type="evidence" value="ECO:0007669"/>
    <property type="project" value="UniProtKB-SubCell"/>
</dbReference>
<dbReference type="CDD" id="cd05380">
    <property type="entry name" value="CAP_euk"/>
    <property type="match status" value="1"/>
</dbReference>
<dbReference type="Gene3D" id="3.40.33.10">
    <property type="entry name" value="CAP"/>
    <property type="match status" value="1"/>
</dbReference>
<dbReference type="InterPro" id="IPR018244">
    <property type="entry name" value="Allrgn_V5/Tpx1_CS"/>
</dbReference>
<dbReference type="InterPro" id="IPR014044">
    <property type="entry name" value="CAP_dom"/>
</dbReference>
<dbReference type="InterPro" id="IPR035940">
    <property type="entry name" value="CAP_sf"/>
</dbReference>
<dbReference type="InterPro" id="IPR001283">
    <property type="entry name" value="CRISP-related"/>
</dbReference>
<dbReference type="InterPro" id="IPR002413">
    <property type="entry name" value="V5_allergen-like"/>
</dbReference>
<dbReference type="PANTHER" id="PTHR10334">
    <property type="entry name" value="CYSTEINE-RICH SECRETORY PROTEIN-RELATED"/>
    <property type="match status" value="1"/>
</dbReference>
<dbReference type="Pfam" id="PF00188">
    <property type="entry name" value="CAP"/>
    <property type="match status" value="1"/>
</dbReference>
<dbReference type="PRINTS" id="PR00838">
    <property type="entry name" value="V5ALLERGEN"/>
</dbReference>
<dbReference type="PRINTS" id="PR00837">
    <property type="entry name" value="V5TPXLIKE"/>
</dbReference>
<dbReference type="SMART" id="SM00198">
    <property type="entry name" value="SCP"/>
    <property type="match status" value="1"/>
</dbReference>
<dbReference type="SUPFAM" id="SSF55797">
    <property type="entry name" value="PR-1-like"/>
    <property type="match status" value="1"/>
</dbReference>
<dbReference type="PROSITE" id="PS01009">
    <property type="entry name" value="CRISP_1"/>
    <property type="match status" value="1"/>
</dbReference>
<dbReference type="PROSITE" id="PS01010">
    <property type="entry name" value="CRISP_2"/>
    <property type="match status" value="1"/>
</dbReference>
<name>VA5_DOLAR</name>
<organism>
    <name type="scientific">Dolichovespula arenaria</name>
    <name type="common">Yellow hornet</name>
    <name type="synonym">Aerial yellowjacket</name>
    <dbReference type="NCBI Taxonomy" id="7442"/>
    <lineage>
        <taxon>Eukaryota</taxon>
        <taxon>Metazoa</taxon>
        <taxon>Ecdysozoa</taxon>
        <taxon>Arthropoda</taxon>
        <taxon>Hexapoda</taxon>
        <taxon>Insecta</taxon>
        <taxon>Pterygota</taxon>
        <taxon>Neoptera</taxon>
        <taxon>Endopterygota</taxon>
        <taxon>Hymenoptera</taxon>
        <taxon>Apocrita</taxon>
        <taxon>Aculeata</taxon>
        <taxon>Vespoidea</taxon>
        <taxon>Vespidae</taxon>
        <taxon>Vespinae</taxon>
        <taxon>Dolichovespula</taxon>
    </lineage>
</organism>